<accession>A0A3G2LGI8</accession>
<feature type="chain" id="PRO_0000451757" description="Talin">
    <location>
        <begin position="1"/>
        <end position="2531"/>
    </location>
</feature>
<feature type="domain" description="FERM" evidence="2">
    <location>
        <begin position="87"/>
        <end position="401"/>
    </location>
</feature>
<feature type="domain" description="I/LWEQ" evidence="3">
    <location>
        <begin position="2287"/>
        <end position="2526"/>
    </location>
</feature>
<feature type="region of interest" description="Interaction with VIN1" evidence="5">
    <location>
        <begin position="598"/>
        <end position="621"/>
    </location>
</feature>
<feature type="region of interest" description="Disordered" evidence="4">
    <location>
        <begin position="2466"/>
        <end position="2485"/>
    </location>
</feature>
<comment type="function">
    <text evidence="8">Probably involved in connections of major cytoskeletal structures to the plasma membrane.</text>
</comment>
<comment type="subunit">
    <text evidence="5">Interacts with VIN1 (vinculin); the interaction facilitates VIN1 binding to F-actin.</text>
</comment>
<comment type="subcellular location">
    <subcellularLocation>
        <location evidence="1">Cytoplasm</location>
        <location evidence="1">Cytoskeleton</location>
    </subcellularLocation>
    <subcellularLocation>
        <location evidence="1">Cytoplasm</location>
        <location evidence="1">Cell cortex</location>
    </subcellularLocation>
</comment>
<keyword id="KW-0963">Cytoplasm</keyword>
<keyword id="KW-0206">Cytoskeleton</keyword>
<evidence type="ECO:0000250" key="1">
    <source>
        <dbReference type="UniProtKB" id="P0CE95"/>
    </source>
</evidence>
<evidence type="ECO:0000255" key="2">
    <source>
        <dbReference type="PROSITE-ProRule" id="PRU00084"/>
    </source>
</evidence>
<evidence type="ECO:0000255" key="3">
    <source>
        <dbReference type="PROSITE-ProRule" id="PRU00292"/>
    </source>
</evidence>
<evidence type="ECO:0000256" key="4">
    <source>
        <dbReference type="SAM" id="MobiDB-lite"/>
    </source>
</evidence>
<evidence type="ECO:0000269" key="5">
    <source>
    </source>
</evidence>
<evidence type="ECO:0000303" key="6">
    <source>
    </source>
</evidence>
<evidence type="ECO:0000305" key="7"/>
<evidence type="ECO:0000305" key="8">
    <source>
    </source>
</evidence>
<name>TLN_OSCPE</name>
<sequence length="2531" mass="266048">MASLALRINIVDQNNVKTMQFEPSMIVYDACKMIRERIGEKPAAGQGYGLFLANEDPKRGVWLESGRTLDFYLLKPGDLLEYKNKMRPLRVRMMDESLKTVLVDDSFTVDQLVKTVCDRIGITNNEEFSLVCEDEEATPKKAAPPQIRNQKKMDELKKKLHTEDDVNWLSHDKTLRSQGISESQVLLLRKKFFFSDQNVDRNDPVQLNQLYAQARDAIVDGTHPCTYEEAINLAALQCQIVLGNHDSGKHKPGYITEELGSYLPREYVKAKGVERRVFTEHAKFTGLSQLNAKFRYIQVVRSLKTYGVTFFLVKEKMKGKNKLAPRLLGITRESIMRVDEKTKEVMKTWPLTTVRRWAASPNSFTLDFGDYSESYYSVQTTEGEQISRLIAGYIDIILKKKRATDRKVPEVEDETTLTEDLVLPARATQVSYVTSTSDRGEEGQVAHPGVLRAAGESGALFVPGDFLEGSHIQRQAAQTPGYSPAQQALQSSIAKGLGCADVAINELEAPTQLPPLGSDPQSLKWKQNTLDVSRQNVGSQLAAMTAAAAQMVGLTGADPADIDYTAVGAAVTTLSSNLTELSKGVRMIAALQGNSHDGEKLLEAARGLAGAVRHLLKSAEPSENQNRKDLLDAAAALGISGTQLMALMGDPDVTQEVQDALLSKAKAVAVATSGLVQNAKMVAGKCPDSTLQSSVITATKGTATATSQLVACTKIVASTITNPLCQEQLINSAKQVAGAVEGTVSSAQNACSDDDALRELGMSATKVTDALQDLLRYIRDIEAGGLRGGKYEEQIEMILAATERLINSLGNAQETVKSAKTVAMATSQMVSGVKDEASGLSDEDAKRRLLAAARGLADATAKMVDAAKVSARDPSNVEAQAALKAATEDLRAAVNAAANNALKKKLIKKLEVAAKHTAAAATQCIAAAQGAGPTNRNQSSQQQLLGNCKTVADHIGRLVQAVRASMANPESPSSQLGLINASQAMIQPCGKMIAASKAAVPTIGDQAAALQLANFAKQTATCLAELRTAAGKAAEACGSLEIESAIDVVRQLEADLLSVQRTAASGKFLPLPGETAESCALELGATSKTVGASMAQLLTAAAQGNENYTGIAARDTANALKVLSGSVRGVAAATDDRSAQEQIIVTAIQVMAHSRRLIEEAKKAIASPTNPENQSRLAQAAKAVSQALNQVINCLPGQRDVDAAIKDIAAASVALTTGQFPSAGGQSFQDVQTSLSVSSAALNVSASELVANSRGTHMQLAQSSQKFAGKYKTMLHSGLMLAGLSKEKAARSKIVGYLRSVSMSSSKLLLAAKALSADPNAPNVKNNLAAAARGVTDAINALVTVCTASAPGQKECDNALRKIQTVGGMLANPVEPVNDNSYFVCLDAVMENSKILGEAMGDITKHAKGERHDEFGSAVSTAASAVCTLTESAAQAAYLVAISDSSSTAAISGLVDTSQFARAQQAIREACEQLLNPSSAQQQVLSSATVIAKHTSGLCNACKIASGKTKNPVAKRKFVQSAKDVATSTANLVKSIKALAGTLNDGNRGDCAKTTKPLLEAIDDLVEFASAAEFASVPAQISPEARSAQAPILVAGNNMLIASSSLISSAKNLAVNPRDAATWQLLASHSKAVSDAIRRLVAAVKDKSPGQAECDQAIELLNMAINEVDQATLAAISSKLTPSSQSTLQGFHTQMMGGVSEISDLIEPVALAAKGDAEKLGHMVTNVVSYFVPLSKAAVGAASKTTNPDRQMAVLEQTKTLAESALQLMYAAKESGGNPAAAAAGAHANINEAAGNMTEAVKDLKGTLEMAASEAGLTAGMVDTIHKAAGTLDDPIHGEVSKSFGEYQESMVHSAKIIILKAQDMVGRAGTSPGELGVISKDATTSYCALATDCRGALATADDDVTGARLKAACQQLGDALGDLIQCAGSVQSNPTDAIGRKELSDCAKKVGSKVNFVLAALQAGAKGTQACINAVADVSGIVGDLDTSVMFATAGVLNPDREGDTFGEHREDILKTAKTLVEDTKTLVSGAAASQEQLAKAAVDAVGTITRLADHVKKGAAALTSEDQEAQVLLLNAVRDVASSLGALITATKNASGKSVQDPAMEHLRTCAKAMVSNVSSLLKTVKSVEDEAARGARALESAIDAINAQLEELLSPNEPGRDASPEDIIRVTKGVTLATAKAVAAGNSGRQDDVTASANLGRKAIIDMMLTTKAAALKAESEDSKIRSITAAKECTAAFRSLLELVHSILMKPSHDKKQKLTAYSKEVATCVSEVVQAAEVLKGTDWVDPSDPNIIAENELLNAAASIEAAAKKLALLKPREKKHEADETLSFDEQILEAARAIAAATGALIKSATTAQRELVAQGRLRPGVPGSDDSQWAEGLVSAARMVAAATQSLCEAANSAVQGVSSEEKLIASAKAVAASTAQLLLACQVKADADSENFKRLHKAGGAVKRAAENLVTAAKRSSEEGDDEEVSGGGQERFVGGIAREIEAQEAILRKERELDEAKRQLKKIRHDKYKRHGQDEP</sequence>
<organism>
    <name type="scientific">Oscarella pearsei</name>
    <name type="common">Sponge</name>
    <dbReference type="NCBI Taxonomy" id="1940113"/>
    <lineage>
        <taxon>Eukaryota</taxon>
        <taxon>Metazoa</taxon>
        <taxon>Porifera</taxon>
        <taxon>Homoscleromorpha</taxon>
        <taxon>Homosclerophorida</taxon>
        <taxon>Oscarellidae</taxon>
        <taxon>Oscarella</taxon>
    </lineage>
</organism>
<proteinExistence type="evidence at protein level"/>
<reference evidence="7" key="1">
    <citation type="journal article" date="2018" name="J. Biol. Chem.">
        <title>Analysis of a vinculin homolog in a sponge (phylum Porifera) reveals that vertebrate-like cell adhesions emerged early in animal evolution.</title>
        <authorList>
            <person name="Miller P.W."/>
            <person name="Pokutta S."/>
            <person name="Mitchell J.M."/>
            <person name="Chodaparambil J.V."/>
            <person name="Clarke D.N."/>
            <person name="Nelson W.J."/>
            <person name="Weis W.I."/>
            <person name="Nichols S.A."/>
        </authorList>
    </citation>
    <scope>NUCLEOTIDE SEQUENCE [MRNA]</scope>
    <scope>INTERACTION WITH VIN1</scope>
</reference>
<gene>
    <name evidence="7" type="primary">TLN</name>
</gene>
<protein>
    <recommendedName>
        <fullName evidence="6">Talin</fullName>
    </recommendedName>
</protein>
<dbReference type="EMBL" id="MG852029">
    <property type="protein sequence ID" value="AYN71349.1"/>
    <property type="molecule type" value="mRNA"/>
</dbReference>
<dbReference type="SMR" id="A0A3G2LGI8"/>
<dbReference type="GO" id="GO:0005938">
    <property type="term" value="C:cell cortex"/>
    <property type="evidence" value="ECO:0007669"/>
    <property type="project" value="UniProtKB-SubCell"/>
</dbReference>
<dbReference type="GO" id="GO:0005856">
    <property type="term" value="C:cytoskeleton"/>
    <property type="evidence" value="ECO:0007669"/>
    <property type="project" value="UniProtKB-SubCell"/>
</dbReference>
<dbReference type="GO" id="GO:0005925">
    <property type="term" value="C:focal adhesion"/>
    <property type="evidence" value="ECO:0007669"/>
    <property type="project" value="InterPro"/>
</dbReference>
<dbReference type="GO" id="GO:0005886">
    <property type="term" value="C:plasma membrane"/>
    <property type="evidence" value="ECO:0007669"/>
    <property type="project" value="TreeGrafter"/>
</dbReference>
<dbReference type="GO" id="GO:0001726">
    <property type="term" value="C:ruffle"/>
    <property type="evidence" value="ECO:0007669"/>
    <property type="project" value="InterPro"/>
</dbReference>
<dbReference type="GO" id="GO:0051015">
    <property type="term" value="F:actin filament binding"/>
    <property type="evidence" value="ECO:0007669"/>
    <property type="project" value="InterPro"/>
</dbReference>
<dbReference type="GO" id="GO:0005178">
    <property type="term" value="F:integrin binding"/>
    <property type="evidence" value="ECO:0007669"/>
    <property type="project" value="TreeGrafter"/>
</dbReference>
<dbReference type="GO" id="GO:0005200">
    <property type="term" value="F:structural constituent of cytoskeleton"/>
    <property type="evidence" value="ECO:0007669"/>
    <property type="project" value="InterPro"/>
</dbReference>
<dbReference type="GO" id="GO:0030036">
    <property type="term" value="P:actin cytoskeleton organization"/>
    <property type="evidence" value="ECO:0007669"/>
    <property type="project" value="TreeGrafter"/>
</dbReference>
<dbReference type="GO" id="GO:0098609">
    <property type="term" value="P:cell-cell adhesion"/>
    <property type="evidence" value="ECO:0007669"/>
    <property type="project" value="TreeGrafter"/>
</dbReference>
<dbReference type="CDD" id="cd14473">
    <property type="entry name" value="FERM_B-lobe"/>
    <property type="match status" value="1"/>
</dbReference>
<dbReference type="CDD" id="cd10569">
    <property type="entry name" value="FERM_C_Talin"/>
    <property type="match status" value="1"/>
</dbReference>
<dbReference type="CDD" id="cd17089">
    <property type="entry name" value="FERM_F0_TLN"/>
    <property type="match status" value="1"/>
</dbReference>
<dbReference type="CDD" id="cd17090">
    <property type="entry name" value="FERM_F1_TLN"/>
    <property type="match status" value="1"/>
</dbReference>
<dbReference type="CDD" id="cd12150">
    <property type="entry name" value="talin-RS"/>
    <property type="match status" value="1"/>
</dbReference>
<dbReference type="FunFam" id="1.20.120.230:FF:000002">
    <property type="entry name" value="Talin 2"/>
    <property type="match status" value="1"/>
</dbReference>
<dbReference type="FunFam" id="1.20.120.230:FF:000004">
    <property type="entry name" value="Talin 2"/>
    <property type="match status" value="1"/>
</dbReference>
<dbReference type="FunFam" id="1.20.1410.10:FF:000001">
    <property type="entry name" value="Talin 2"/>
    <property type="match status" value="1"/>
</dbReference>
<dbReference type="FunFam" id="1.20.1420.10:FF:000006">
    <property type="entry name" value="Talin 2"/>
    <property type="match status" value="1"/>
</dbReference>
<dbReference type="FunFam" id="1.20.80.10:FF:000007">
    <property type="entry name" value="Talin 2"/>
    <property type="match status" value="1"/>
</dbReference>
<dbReference type="FunFam" id="2.30.29.30:FF:000028">
    <property type="entry name" value="Talin 2"/>
    <property type="match status" value="1"/>
</dbReference>
<dbReference type="Gene3D" id="1.20.80.10">
    <property type="match status" value="1"/>
</dbReference>
<dbReference type="Gene3D" id="1.20.120.230">
    <property type="entry name" value="Alpha-catenin/vinculin-like"/>
    <property type="match status" value="5"/>
</dbReference>
<dbReference type="Gene3D" id="1.20.1410.10">
    <property type="entry name" value="I/LWEQ domain"/>
    <property type="match status" value="1"/>
</dbReference>
<dbReference type="Gene3D" id="3.10.20.90">
    <property type="entry name" value="Phosphatidylinositol 3-kinase Catalytic Subunit, Chain A, domain 1"/>
    <property type="match status" value="2"/>
</dbReference>
<dbReference type="Gene3D" id="2.30.29.30">
    <property type="entry name" value="Pleckstrin-homology domain (PH domain)/Phosphotyrosine-binding domain (PTB)"/>
    <property type="match status" value="1"/>
</dbReference>
<dbReference type="Gene3D" id="1.20.1420.10">
    <property type="entry name" value="Talin, central domain"/>
    <property type="match status" value="7"/>
</dbReference>
<dbReference type="InterPro" id="IPR036723">
    <property type="entry name" value="Alpha-catenin/vinculin-like_sf"/>
</dbReference>
<dbReference type="InterPro" id="IPR019749">
    <property type="entry name" value="Band_41_domain"/>
</dbReference>
<dbReference type="InterPro" id="IPR014352">
    <property type="entry name" value="FERM/acyl-CoA-bd_prot_sf"/>
</dbReference>
<dbReference type="InterPro" id="IPR035963">
    <property type="entry name" value="FERM_2"/>
</dbReference>
<dbReference type="InterPro" id="IPR019748">
    <property type="entry name" value="FERM_central"/>
</dbReference>
<dbReference type="InterPro" id="IPR019747">
    <property type="entry name" value="FERM_CS"/>
</dbReference>
<dbReference type="InterPro" id="IPR000299">
    <property type="entry name" value="FERM_domain"/>
</dbReference>
<dbReference type="InterPro" id="IPR032425">
    <property type="entry name" value="FERM_f0"/>
</dbReference>
<dbReference type="InterPro" id="IPR035964">
    <property type="entry name" value="I/LWEQ_dom_sf"/>
</dbReference>
<dbReference type="InterPro" id="IPR002558">
    <property type="entry name" value="ILWEQ_dom"/>
</dbReference>
<dbReference type="InterPro" id="IPR002404">
    <property type="entry name" value="IRS_PTB"/>
</dbReference>
<dbReference type="InterPro" id="IPR011993">
    <property type="entry name" value="PH-like_dom_sf"/>
</dbReference>
<dbReference type="InterPro" id="IPR037438">
    <property type="entry name" value="Talin1/2-RS"/>
</dbReference>
<dbReference type="InterPro" id="IPR015224">
    <property type="entry name" value="Talin_cent"/>
</dbReference>
<dbReference type="InterPro" id="IPR036476">
    <property type="entry name" value="Talin_cent_sf"/>
</dbReference>
<dbReference type="InterPro" id="IPR054082">
    <property type="entry name" value="Talin_IBS2B"/>
</dbReference>
<dbReference type="InterPro" id="IPR049108">
    <property type="entry name" value="Talin_R4"/>
</dbReference>
<dbReference type="InterPro" id="IPR054060">
    <property type="entry name" value="TLN1-like_RS"/>
</dbReference>
<dbReference type="InterPro" id="IPR029071">
    <property type="entry name" value="Ubiquitin-like_domsf"/>
</dbReference>
<dbReference type="InterPro" id="IPR015009">
    <property type="entry name" value="Vinculin-bd_dom"/>
</dbReference>
<dbReference type="PANTHER" id="PTHR19981:SF1">
    <property type="entry name" value="RHEA, ISOFORM B"/>
    <property type="match status" value="1"/>
</dbReference>
<dbReference type="PANTHER" id="PTHR19981">
    <property type="entry name" value="TALIN"/>
    <property type="match status" value="1"/>
</dbReference>
<dbReference type="Pfam" id="PF16511">
    <property type="entry name" value="FERM_f0"/>
    <property type="match status" value="1"/>
</dbReference>
<dbReference type="Pfam" id="PF00373">
    <property type="entry name" value="FERM_M"/>
    <property type="match status" value="1"/>
</dbReference>
<dbReference type="Pfam" id="PF01608">
    <property type="entry name" value="I_LWEQ"/>
    <property type="match status" value="1"/>
</dbReference>
<dbReference type="Pfam" id="PF02174">
    <property type="entry name" value="IRS"/>
    <property type="match status" value="1"/>
</dbReference>
<dbReference type="Pfam" id="PF21989">
    <property type="entry name" value="RA_2"/>
    <property type="match status" value="1"/>
</dbReference>
<dbReference type="Pfam" id="PF21896">
    <property type="entry name" value="Talin_IBS2B"/>
    <property type="match status" value="5"/>
</dbReference>
<dbReference type="Pfam" id="PF09141">
    <property type="entry name" value="Talin_middle"/>
    <property type="match status" value="1"/>
</dbReference>
<dbReference type="Pfam" id="PF21692">
    <property type="entry name" value="Talin_R4"/>
    <property type="match status" value="1"/>
</dbReference>
<dbReference type="Pfam" id="PF25177">
    <property type="entry name" value="Talin_VBS2"/>
    <property type="match status" value="1"/>
</dbReference>
<dbReference type="Pfam" id="PF21865">
    <property type="entry name" value="TLN1-like_RS"/>
    <property type="match status" value="2"/>
</dbReference>
<dbReference type="Pfam" id="PF08913">
    <property type="entry name" value="VBS"/>
    <property type="match status" value="1"/>
</dbReference>
<dbReference type="SMART" id="SM00295">
    <property type="entry name" value="B41"/>
    <property type="match status" value="1"/>
</dbReference>
<dbReference type="SMART" id="SM00307">
    <property type="entry name" value="ILWEQ"/>
    <property type="match status" value="1"/>
</dbReference>
<dbReference type="SMART" id="SM01244">
    <property type="entry name" value="IRS"/>
    <property type="match status" value="1"/>
</dbReference>
<dbReference type="SUPFAM" id="SSF109880">
    <property type="entry name" value="A middle domain of Talin 1"/>
    <property type="match status" value="1"/>
</dbReference>
<dbReference type="SUPFAM" id="SSF47220">
    <property type="entry name" value="alpha-catenin/vinculin-like"/>
    <property type="match status" value="6"/>
</dbReference>
<dbReference type="SUPFAM" id="SSF109885">
    <property type="entry name" value="I/LWEQ domain"/>
    <property type="match status" value="4"/>
</dbReference>
<dbReference type="SUPFAM" id="SSF50729">
    <property type="entry name" value="PH domain-like"/>
    <property type="match status" value="1"/>
</dbReference>
<dbReference type="SUPFAM" id="SSF47031">
    <property type="entry name" value="Second domain of FERM"/>
    <property type="match status" value="1"/>
</dbReference>
<dbReference type="SUPFAM" id="SSF54236">
    <property type="entry name" value="Ubiquitin-like"/>
    <property type="match status" value="1"/>
</dbReference>
<dbReference type="PROSITE" id="PS00660">
    <property type="entry name" value="FERM_1"/>
    <property type="match status" value="1"/>
</dbReference>
<dbReference type="PROSITE" id="PS00661">
    <property type="entry name" value="FERM_2"/>
    <property type="match status" value="1"/>
</dbReference>
<dbReference type="PROSITE" id="PS50057">
    <property type="entry name" value="FERM_3"/>
    <property type="match status" value="1"/>
</dbReference>
<dbReference type="PROSITE" id="PS50945">
    <property type="entry name" value="I_LWEQ"/>
    <property type="match status" value="1"/>
</dbReference>